<accession>P0DKJ6</accession>
<accession>Q8LD23</accession>
<accession>Q9LNT7</accession>
<proteinExistence type="evidence at transcript level"/>
<gene>
    <name evidence="6" type="ordered locus">At1g20120</name>
    <name evidence="7" type="ORF">T20H2.10</name>
</gene>
<keyword id="KW-0325">Glycoprotein</keyword>
<keyword id="KW-0378">Hydrolase</keyword>
<keyword id="KW-0442">Lipid degradation</keyword>
<keyword id="KW-0443">Lipid metabolism</keyword>
<keyword id="KW-1185">Reference proteome</keyword>
<keyword id="KW-0964">Secreted</keyword>
<keyword id="KW-0732">Signal</keyword>
<sequence length="402" mass="44222">MLQDRVSGSLSSSKISRCVLFLSLFCFFLLTMHASANRLQRVPNPGPSPAPEPKPCPSPGPNPAPATTKRTHNTTFPAIFAFGDSILDTGNNDYILTLIKANFLPYGMNFPDKVPTGRFCNGKIPSDFIADYIGVKPVVPAYLRPGLTQEDLLTGVSFASGGSGYDPLTPIVVSAIPMSKQLTYFQEYIEKVKGFVGKEKAEHIISKGLAIVVAGSDDLANTYYGEHLEEFLYDIDTYTSFMASSAASFAMQLYESGAKKIGFIGVSPIGCIPIQRTTRGGLKRKCADELNFAAQLFNSKLSTSLNELAKTMKNTTLVYIDIYSSFNDMIQNPKKYGFDEIDRGCCGTGLLELGPLCNKYTSLLCKNVSSFMFWDSYHPTERAYKILSQKFVENDMGPFYDN</sequence>
<evidence type="ECO:0000250" key="1"/>
<evidence type="ECO:0000255" key="2"/>
<evidence type="ECO:0000256" key="3">
    <source>
        <dbReference type="SAM" id="MobiDB-lite"/>
    </source>
</evidence>
<evidence type="ECO:0000303" key="4">
    <source>
    </source>
</evidence>
<evidence type="ECO:0000305" key="5"/>
<evidence type="ECO:0000312" key="6">
    <source>
        <dbReference type="Araport" id="AT1G20120"/>
    </source>
</evidence>
<evidence type="ECO:0000312" key="7">
    <source>
        <dbReference type="EMBL" id="AAF79901.1"/>
    </source>
</evidence>
<reference key="1">
    <citation type="journal article" date="2000" name="Nature">
        <title>Sequence and analysis of chromosome 1 of the plant Arabidopsis thaliana.</title>
        <authorList>
            <person name="Theologis A."/>
            <person name="Ecker J.R."/>
            <person name="Palm C.J."/>
            <person name="Federspiel N.A."/>
            <person name="Kaul S."/>
            <person name="White O."/>
            <person name="Alonso J."/>
            <person name="Altafi H."/>
            <person name="Araujo R."/>
            <person name="Bowman C.L."/>
            <person name="Brooks S.Y."/>
            <person name="Buehler E."/>
            <person name="Chan A."/>
            <person name="Chao Q."/>
            <person name="Chen H."/>
            <person name="Cheuk R.F."/>
            <person name="Chin C.W."/>
            <person name="Chung M.K."/>
            <person name="Conn L."/>
            <person name="Conway A.B."/>
            <person name="Conway A.R."/>
            <person name="Creasy T.H."/>
            <person name="Dewar K."/>
            <person name="Dunn P."/>
            <person name="Etgu P."/>
            <person name="Feldblyum T.V."/>
            <person name="Feng J.-D."/>
            <person name="Fong B."/>
            <person name="Fujii C.Y."/>
            <person name="Gill J.E."/>
            <person name="Goldsmith A.D."/>
            <person name="Haas B."/>
            <person name="Hansen N.F."/>
            <person name="Hughes B."/>
            <person name="Huizar L."/>
            <person name="Hunter J.L."/>
            <person name="Jenkins J."/>
            <person name="Johnson-Hopson C."/>
            <person name="Khan S."/>
            <person name="Khaykin E."/>
            <person name="Kim C.J."/>
            <person name="Koo H.L."/>
            <person name="Kremenetskaia I."/>
            <person name="Kurtz D.B."/>
            <person name="Kwan A."/>
            <person name="Lam B."/>
            <person name="Langin-Hooper S."/>
            <person name="Lee A."/>
            <person name="Lee J.M."/>
            <person name="Lenz C.A."/>
            <person name="Li J.H."/>
            <person name="Li Y.-P."/>
            <person name="Lin X."/>
            <person name="Liu S.X."/>
            <person name="Liu Z.A."/>
            <person name="Luros J.S."/>
            <person name="Maiti R."/>
            <person name="Marziali A."/>
            <person name="Militscher J."/>
            <person name="Miranda M."/>
            <person name="Nguyen M."/>
            <person name="Nierman W.C."/>
            <person name="Osborne B.I."/>
            <person name="Pai G."/>
            <person name="Peterson J."/>
            <person name="Pham P.K."/>
            <person name="Rizzo M."/>
            <person name="Rooney T."/>
            <person name="Rowley D."/>
            <person name="Sakano H."/>
            <person name="Salzberg S.L."/>
            <person name="Schwartz J.R."/>
            <person name="Shinn P."/>
            <person name="Southwick A.M."/>
            <person name="Sun H."/>
            <person name="Tallon L.J."/>
            <person name="Tambunga G."/>
            <person name="Toriumi M.J."/>
            <person name="Town C.D."/>
            <person name="Utterback T."/>
            <person name="Van Aken S."/>
            <person name="Vaysberg M."/>
            <person name="Vysotskaia V.S."/>
            <person name="Walker M."/>
            <person name="Wu D."/>
            <person name="Yu G."/>
            <person name="Fraser C.M."/>
            <person name="Venter J.C."/>
            <person name="Davis R.W."/>
        </authorList>
    </citation>
    <scope>NUCLEOTIDE SEQUENCE [LARGE SCALE GENOMIC DNA]</scope>
    <source>
        <strain>cv. Columbia</strain>
    </source>
</reference>
<reference key="2">
    <citation type="journal article" date="2017" name="Plant J.">
        <title>Araport11: a complete reannotation of the Arabidopsis thaliana reference genome.</title>
        <authorList>
            <person name="Cheng C.Y."/>
            <person name="Krishnakumar V."/>
            <person name="Chan A.P."/>
            <person name="Thibaud-Nissen F."/>
            <person name="Schobel S."/>
            <person name="Town C.D."/>
        </authorList>
    </citation>
    <scope>GENOME REANNOTATION</scope>
    <source>
        <strain>cv. Columbia</strain>
    </source>
</reference>
<reference key="3">
    <citation type="submission" date="2002-03" db="EMBL/GenBank/DDBJ databases">
        <title>Full-length cDNA from Arabidopsis thaliana.</title>
        <authorList>
            <person name="Brover V.V."/>
            <person name="Troukhan M.E."/>
            <person name="Alexandrov N.A."/>
            <person name="Lu Y.-P."/>
            <person name="Flavell R.B."/>
            <person name="Feldmann K.A."/>
        </authorList>
    </citation>
    <scope>NUCLEOTIDE SEQUENCE [LARGE SCALE MRNA]</scope>
</reference>
<reference key="4">
    <citation type="journal article" date="2004" name="Prog. Lipid Res.">
        <title>GDSL family of serine esterases/lipases.</title>
        <authorList>
            <person name="Akoh C.C."/>
            <person name="Lee G.-C."/>
            <person name="Liaw Y.-C."/>
            <person name="Huang T.-H."/>
            <person name="Shaw J.-F."/>
        </authorList>
    </citation>
    <scope>REVIEW</scope>
</reference>
<reference key="5">
    <citation type="journal article" date="2008" name="Pak. J. Biol. Sci.">
        <title>Sequence analysis of GDSL lipase gene family in Arabidopsis thaliana.</title>
        <authorList>
            <person name="Ling H."/>
        </authorList>
    </citation>
    <scope>GENE FAMILY</scope>
</reference>
<feature type="signal peptide" evidence="2">
    <location>
        <begin position="1"/>
        <end position="35"/>
    </location>
</feature>
<feature type="chain" id="PRO_0000367346" description="GDSL esterase/lipase At1g20120">
    <location>
        <begin position="36"/>
        <end position="402"/>
    </location>
</feature>
<feature type="region of interest" description="Disordered" evidence="3">
    <location>
        <begin position="41"/>
        <end position="69"/>
    </location>
</feature>
<feature type="compositionally biased region" description="Pro residues" evidence="3">
    <location>
        <begin position="44"/>
        <end position="64"/>
    </location>
</feature>
<feature type="active site" description="Nucleophile" evidence="1">
    <location>
        <position position="85"/>
    </location>
</feature>
<feature type="active site" evidence="1">
    <location>
        <position position="375"/>
    </location>
</feature>
<feature type="active site" evidence="1">
    <location>
        <position position="378"/>
    </location>
</feature>
<feature type="glycosylation site" description="N-linked (GlcNAc...) asparagine" evidence="2">
    <location>
        <position position="73"/>
    </location>
</feature>
<feature type="glycosylation site" description="N-linked (GlcNAc...) asparagine" evidence="2">
    <location>
        <position position="314"/>
    </location>
</feature>
<feature type="glycosylation site" description="N-linked (GlcNAc...) asparagine" evidence="2">
    <location>
        <position position="367"/>
    </location>
</feature>
<feature type="sequence conflict" description="In Ref. 3; AAM64323." evidence="5" ref="3">
    <original>G</original>
    <variation>C</variation>
    <location>
        <position position="8"/>
    </location>
</feature>
<feature type="sequence conflict" description="In Ref. 3; AAM64323." evidence="5" ref="3">
    <original>K</original>
    <variation>R</variation>
    <location>
        <position position="300"/>
    </location>
</feature>
<feature type="sequence conflict" description="In Ref. 3; AAM64323." evidence="5" ref="3">
    <original>N</original>
    <variation>NSM</variation>
    <location>
        <position position="402"/>
    </location>
</feature>
<name>GDL4_ARATH</name>
<comment type="subcellular location">
    <subcellularLocation>
        <location evidence="5">Secreted</location>
    </subcellularLocation>
</comment>
<comment type="similarity">
    <text evidence="5">Belongs to the 'GDSL' lipolytic enzyme family.</text>
</comment>
<comment type="sequence caution" evidence="5">
    <conflict type="erroneous gene model prediction">
        <sequence resource="EMBL-CDS" id="AAF79901"/>
    </conflict>
    <text>The predicted gene At1g20110 has been split into 2 genes: At1g20110 and At1g20120.</text>
</comment>
<organism>
    <name type="scientific">Arabidopsis thaliana</name>
    <name type="common">Mouse-ear cress</name>
    <dbReference type="NCBI Taxonomy" id="3702"/>
    <lineage>
        <taxon>Eukaryota</taxon>
        <taxon>Viridiplantae</taxon>
        <taxon>Streptophyta</taxon>
        <taxon>Embryophyta</taxon>
        <taxon>Tracheophyta</taxon>
        <taxon>Spermatophyta</taxon>
        <taxon>Magnoliopsida</taxon>
        <taxon>eudicotyledons</taxon>
        <taxon>Gunneridae</taxon>
        <taxon>Pentapetalae</taxon>
        <taxon>rosids</taxon>
        <taxon>malvids</taxon>
        <taxon>Brassicales</taxon>
        <taxon>Brassicaceae</taxon>
        <taxon>Camelineae</taxon>
        <taxon>Arabidopsis</taxon>
    </lineage>
</organism>
<protein>
    <recommendedName>
        <fullName evidence="4">GDSL esterase/lipase At1g20120</fullName>
        <ecNumber evidence="5">3.1.1.-</ecNumber>
    </recommendedName>
    <alternativeName>
        <fullName>Extracellular lipase At1g20120</fullName>
    </alternativeName>
</protein>
<dbReference type="EC" id="3.1.1.-" evidence="5"/>
<dbReference type="EMBL" id="AC022472">
    <property type="protein sequence ID" value="AAF79901.1"/>
    <property type="status" value="ALT_SEQ"/>
    <property type="molecule type" value="Genomic_DNA"/>
</dbReference>
<dbReference type="EMBL" id="CP002684">
    <property type="protein sequence ID" value="AEE29938.1"/>
    <property type="molecule type" value="Genomic_DNA"/>
</dbReference>
<dbReference type="EMBL" id="AY086248">
    <property type="protein sequence ID" value="AAM64323.1"/>
    <property type="molecule type" value="mRNA"/>
</dbReference>
<dbReference type="PIR" id="H86334">
    <property type="entry name" value="H86334"/>
</dbReference>
<dbReference type="RefSeq" id="NP_564104.1">
    <property type="nucleotide sequence ID" value="NM_101866.3"/>
</dbReference>
<dbReference type="SMR" id="P0DKJ6"/>
<dbReference type="FunCoup" id="P0DKJ6">
    <property type="interactions" value="87"/>
</dbReference>
<dbReference type="STRING" id="3702.P0DKJ6"/>
<dbReference type="GlyGen" id="P0DKJ6">
    <property type="glycosylation" value="3 sites"/>
</dbReference>
<dbReference type="PaxDb" id="3702-AT1G20120.1"/>
<dbReference type="ProteomicsDB" id="224759"/>
<dbReference type="EnsemblPlants" id="AT1G20120.1">
    <property type="protein sequence ID" value="AT1G20120.1"/>
    <property type="gene ID" value="AT1G20120"/>
</dbReference>
<dbReference type="GeneID" id="838601"/>
<dbReference type="Gramene" id="AT1G20120.1">
    <property type="protein sequence ID" value="AT1G20120.1"/>
    <property type="gene ID" value="AT1G20120"/>
</dbReference>
<dbReference type="KEGG" id="ath:AT1G20120"/>
<dbReference type="Araport" id="AT1G20120"/>
<dbReference type="TAIR" id="AT1G20120"/>
<dbReference type="eggNOG" id="ENOG502QW19">
    <property type="taxonomic scope" value="Eukaryota"/>
</dbReference>
<dbReference type="InParanoid" id="P0DKJ6"/>
<dbReference type="OMA" id="CANNINV"/>
<dbReference type="PhylomeDB" id="P0DKJ6"/>
<dbReference type="PRO" id="PR:P0DKJ6"/>
<dbReference type="Proteomes" id="UP000006548">
    <property type="component" value="Chromosome 1"/>
</dbReference>
<dbReference type="ExpressionAtlas" id="P0DKJ6">
    <property type="expression patterns" value="baseline and differential"/>
</dbReference>
<dbReference type="GO" id="GO:0005576">
    <property type="term" value="C:extracellular region"/>
    <property type="evidence" value="ECO:0007669"/>
    <property type="project" value="UniProtKB-SubCell"/>
</dbReference>
<dbReference type="GO" id="GO:0016298">
    <property type="term" value="F:lipase activity"/>
    <property type="evidence" value="ECO:0007669"/>
    <property type="project" value="InterPro"/>
</dbReference>
<dbReference type="GO" id="GO:0016042">
    <property type="term" value="P:lipid catabolic process"/>
    <property type="evidence" value="ECO:0007669"/>
    <property type="project" value="UniProtKB-KW"/>
</dbReference>
<dbReference type="CDD" id="cd01837">
    <property type="entry name" value="SGNH_plant_lipase_like"/>
    <property type="match status" value="1"/>
</dbReference>
<dbReference type="FunFam" id="3.40.50.1110:FF:000003">
    <property type="entry name" value="GDSL esterase/lipase APG"/>
    <property type="match status" value="1"/>
</dbReference>
<dbReference type="Gene3D" id="3.40.50.1110">
    <property type="entry name" value="SGNH hydrolase"/>
    <property type="match status" value="1"/>
</dbReference>
<dbReference type="InterPro" id="IPR001087">
    <property type="entry name" value="GDSL"/>
</dbReference>
<dbReference type="InterPro" id="IPR050592">
    <property type="entry name" value="GDSL_lipolytic_enzyme"/>
</dbReference>
<dbReference type="InterPro" id="IPR008265">
    <property type="entry name" value="Lipase_GDSL_AS"/>
</dbReference>
<dbReference type="InterPro" id="IPR036514">
    <property type="entry name" value="SGNH_hydro_sf"/>
</dbReference>
<dbReference type="InterPro" id="IPR035669">
    <property type="entry name" value="SGNH_plant_lipase-like"/>
</dbReference>
<dbReference type="PANTHER" id="PTHR45642:SF79">
    <property type="entry name" value="ANTHER-SPECIFIC PROLINE RICH PROTEIN"/>
    <property type="match status" value="1"/>
</dbReference>
<dbReference type="PANTHER" id="PTHR45642">
    <property type="entry name" value="GDSL ESTERASE/LIPASE EXL3"/>
    <property type="match status" value="1"/>
</dbReference>
<dbReference type="Pfam" id="PF00657">
    <property type="entry name" value="Lipase_GDSL"/>
    <property type="match status" value="1"/>
</dbReference>
<dbReference type="SUPFAM" id="SSF52266">
    <property type="entry name" value="SGNH hydrolase"/>
    <property type="match status" value="1"/>
</dbReference>
<dbReference type="PROSITE" id="PS01098">
    <property type="entry name" value="LIPASE_GDSL_SER"/>
    <property type="match status" value="1"/>
</dbReference>